<evidence type="ECO:0000255" key="1">
    <source>
        <dbReference type="HAMAP-Rule" id="MF_01334"/>
    </source>
</evidence>
<evidence type="ECO:0000256" key="2">
    <source>
        <dbReference type="SAM" id="MobiDB-lite"/>
    </source>
</evidence>
<evidence type="ECO:0000305" key="3"/>
<sequence>MANEIPDLECQVRAGTGKGAARAARRANLVPGVVFGGDADPLAIQIPYNVLLKRLKAGRFKSTLFNLKVEGHDDVRVICRDVQRDVVKDLPTHFDLMRLRRTSKINLFIPVEFINEEECVGLKRGGVLTVVRAEVELVVTAGDIPEKLTVDLTGKAIGDVIHISDVTLPEGSKPTIDRDFVIANISAPSGLKSADDEAEGEDAEEAAAE</sequence>
<keyword id="KW-1185">Reference proteome</keyword>
<keyword id="KW-0687">Ribonucleoprotein</keyword>
<keyword id="KW-0689">Ribosomal protein</keyword>
<keyword id="KW-0694">RNA-binding</keyword>
<keyword id="KW-0699">rRNA-binding</keyword>
<feature type="chain" id="PRO_1000052936" description="Large ribosomal subunit protein bL25">
    <location>
        <begin position="1"/>
        <end position="209"/>
    </location>
</feature>
<feature type="region of interest" description="Disordered" evidence="2">
    <location>
        <begin position="190"/>
        <end position="209"/>
    </location>
</feature>
<feature type="compositionally biased region" description="Acidic residues" evidence="2">
    <location>
        <begin position="196"/>
        <end position="209"/>
    </location>
</feature>
<accession>Q1GK67</accession>
<protein>
    <recommendedName>
        <fullName evidence="1">Large ribosomal subunit protein bL25</fullName>
    </recommendedName>
    <alternativeName>
        <fullName evidence="3">50S ribosomal protein L25</fullName>
    </alternativeName>
    <alternativeName>
        <fullName evidence="1">General stress protein CTC</fullName>
    </alternativeName>
</protein>
<name>RL25_RUEST</name>
<proteinExistence type="inferred from homology"/>
<dbReference type="EMBL" id="CP000377">
    <property type="protein sequence ID" value="ABF62949.1"/>
    <property type="molecule type" value="Genomic_DNA"/>
</dbReference>
<dbReference type="RefSeq" id="WP_011537583.1">
    <property type="nucleotide sequence ID" value="NC_008044.1"/>
</dbReference>
<dbReference type="SMR" id="Q1GK67"/>
<dbReference type="STRING" id="292414.TM1040_0216"/>
<dbReference type="KEGG" id="sit:TM1040_0216"/>
<dbReference type="eggNOG" id="COG1825">
    <property type="taxonomic scope" value="Bacteria"/>
</dbReference>
<dbReference type="HOGENOM" id="CLU_075939_0_0_5"/>
<dbReference type="OrthoDB" id="9806411at2"/>
<dbReference type="Proteomes" id="UP000000636">
    <property type="component" value="Chromosome"/>
</dbReference>
<dbReference type="GO" id="GO:0022625">
    <property type="term" value="C:cytosolic large ribosomal subunit"/>
    <property type="evidence" value="ECO:0007669"/>
    <property type="project" value="TreeGrafter"/>
</dbReference>
<dbReference type="GO" id="GO:0008097">
    <property type="term" value="F:5S rRNA binding"/>
    <property type="evidence" value="ECO:0007669"/>
    <property type="project" value="InterPro"/>
</dbReference>
<dbReference type="GO" id="GO:0003735">
    <property type="term" value="F:structural constituent of ribosome"/>
    <property type="evidence" value="ECO:0007669"/>
    <property type="project" value="InterPro"/>
</dbReference>
<dbReference type="GO" id="GO:0006412">
    <property type="term" value="P:translation"/>
    <property type="evidence" value="ECO:0007669"/>
    <property type="project" value="UniProtKB-UniRule"/>
</dbReference>
<dbReference type="CDD" id="cd00495">
    <property type="entry name" value="Ribosomal_L25_TL5_CTC"/>
    <property type="match status" value="1"/>
</dbReference>
<dbReference type="Gene3D" id="2.170.120.20">
    <property type="entry name" value="Ribosomal protein L25, beta domain"/>
    <property type="match status" value="1"/>
</dbReference>
<dbReference type="Gene3D" id="2.40.240.10">
    <property type="entry name" value="Ribosomal Protein L25, Chain P"/>
    <property type="match status" value="1"/>
</dbReference>
<dbReference type="HAMAP" id="MF_01334">
    <property type="entry name" value="Ribosomal_bL25_CTC"/>
    <property type="match status" value="1"/>
</dbReference>
<dbReference type="InterPro" id="IPR020056">
    <property type="entry name" value="Rbsml_bL25/Gln-tRNA_synth_N"/>
</dbReference>
<dbReference type="InterPro" id="IPR011035">
    <property type="entry name" value="Ribosomal_bL25/Gln-tRNA_synth"/>
</dbReference>
<dbReference type="InterPro" id="IPR020057">
    <property type="entry name" value="Ribosomal_bL25_b-dom"/>
</dbReference>
<dbReference type="InterPro" id="IPR037121">
    <property type="entry name" value="Ribosomal_bL25_C"/>
</dbReference>
<dbReference type="InterPro" id="IPR001021">
    <property type="entry name" value="Ribosomal_bL25_long"/>
</dbReference>
<dbReference type="InterPro" id="IPR029751">
    <property type="entry name" value="Ribosomal_L25_dom"/>
</dbReference>
<dbReference type="InterPro" id="IPR020930">
    <property type="entry name" value="Ribosomal_uL5_bac-type"/>
</dbReference>
<dbReference type="NCBIfam" id="TIGR00731">
    <property type="entry name" value="bL25_bact_ctc"/>
    <property type="match status" value="1"/>
</dbReference>
<dbReference type="NCBIfam" id="NF004128">
    <property type="entry name" value="PRK05618.1-2"/>
    <property type="match status" value="1"/>
</dbReference>
<dbReference type="PANTHER" id="PTHR33284">
    <property type="entry name" value="RIBOSOMAL PROTEIN L25/GLN-TRNA SYNTHETASE, ANTI-CODON-BINDING DOMAIN-CONTAINING PROTEIN"/>
    <property type="match status" value="1"/>
</dbReference>
<dbReference type="PANTHER" id="PTHR33284:SF1">
    <property type="entry name" value="RIBOSOMAL PROTEIN L25_GLN-TRNA SYNTHETASE, ANTI-CODON-BINDING DOMAIN-CONTAINING PROTEIN"/>
    <property type="match status" value="1"/>
</dbReference>
<dbReference type="Pfam" id="PF01386">
    <property type="entry name" value="Ribosomal_L25p"/>
    <property type="match status" value="1"/>
</dbReference>
<dbReference type="Pfam" id="PF14693">
    <property type="entry name" value="Ribosomal_TL5_C"/>
    <property type="match status" value="1"/>
</dbReference>
<dbReference type="SUPFAM" id="SSF50715">
    <property type="entry name" value="Ribosomal protein L25-like"/>
    <property type="match status" value="1"/>
</dbReference>
<comment type="function">
    <text evidence="1">This is one of the proteins that binds to the 5S RNA in the ribosome where it forms part of the central protuberance.</text>
</comment>
<comment type="subunit">
    <text evidence="1">Part of the 50S ribosomal subunit; part of the 5S rRNA/L5/L18/L25 subcomplex. Contacts the 5S rRNA. Binds to the 5S rRNA independently of L5 and L18.</text>
</comment>
<comment type="similarity">
    <text evidence="1">Belongs to the bacterial ribosomal protein bL25 family. CTC subfamily.</text>
</comment>
<gene>
    <name evidence="1" type="primary">rplY</name>
    <name evidence="1" type="synonym">ctc</name>
    <name type="ordered locus">TM1040_0216</name>
</gene>
<organism>
    <name type="scientific">Ruegeria sp. (strain TM1040)</name>
    <name type="common">Silicibacter sp.</name>
    <dbReference type="NCBI Taxonomy" id="292414"/>
    <lineage>
        <taxon>Bacteria</taxon>
        <taxon>Pseudomonadati</taxon>
        <taxon>Pseudomonadota</taxon>
        <taxon>Alphaproteobacteria</taxon>
        <taxon>Rhodobacterales</taxon>
        <taxon>Roseobacteraceae</taxon>
        <taxon>Ruegeria</taxon>
    </lineage>
</organism>
<reference key="1">
    <citation type="submission" date="2006-05" db="EMBL/GenBank/DDBJ databases">
        <title>Complete sequence of chromosome of Silicibacter sp. TM1040.</title>
        <authorList>
            <consortium name="US DOE Joint Genome Institute"/>
            <person name="Copeland A."/>
            <person name="Lucas S."/>
            <person name="Lapidus A."/>
            <person name="Barry K."/>
            <person name="Detter J.C."/>
            <person name="Glavina del Rio T."/>
            <person name="Hammon N."/>
            <person name="Israni S."/>
            <person name="Dalin E."/>
            <person name="Tice H."/>
            <person name="Pitluck S."/>
            <person name="Brettin T."/>
            <person name="Bruce D."/>
            <person name="Han C."/>
            <person name="Tapia R."/>
            <person name="Goodwin L."/>
            <person name="Thompson L.S."/>
            <person name="Gilna P."/>
            <person name="Schmutz J."/>
            <person name="Larimer F."/>
            <person name="Land M."/>
            <person name="Hauser L."/>
            <person name="Kyrpides N."/>
            <person name="Kim E."/>
            <person name="Belas R."/>
            <person name="Moran M.A."/>
            <person name="Buchan A."/>
            <person name="Gonzalez J.M."/>
            <person name="Schell M.A."/>
            <person name="Sun F."/>
            <person name="Richardson P."/>
        </authorList>
    </citation>
    <scope>NUCLEOTIDE SEQUENCE [LARGE SCALE GENOMIC DNA]</scope>
    <source>
        <strain>TM1040</strain>
    </source>
</reference>